<accession>P49267</accession>
<name>TX211_APOSC</name>
<reference key="1">
    <citation type="journal article" date="1992" name="Toxicon">
        <title>Identification of insecticidal peptides from venom of the trap-door spider, Aptostichus schlingeri (Ctenizidae).</title>
        <authorList>
            <person name="Skinner W.S."/>
            <person name="Dennis P.A."/>
            <person name="Li J.P."/>
            <person name="Quistad G.B."/>
        </authorList>
    </citation>
    <scope>PROTEIN SEQUENCE</scope>
    <scope>FUNCTION</scope>
    <scope>TOXIC DOSE</scope>
    <scope>BIOASSAY</scope>
    <scope>SUBCELLULAR LOCATION</scope>
    <source>
        <tissue>Venom</tissue>
    </source>
</reference>
<dbReference type="PIR" id="F44007">
    <property type="entry name" value="F44007"/>
</dbReference>
<dbReference type="SMR" id="P49267"/>
<dbReference type="ArachnoServer" id="AS000396">
    <property type="toxin name" value="U1-cyrtautoxin-As1a"/>
</dbReference>
<dbReference type="GO" id="GO:0005576">
    <property type="term" value="C:extracellular region"/>
    <property type="evidence" value="ECO:0007669"/>
    <property type="project" value="UniProtKB-SubCell"/>
</dbReference>
<dbReference type="GO" id="GO:0099106">
    <property type="term" value="F:ion channel regulator activity"/>
    <property type="evidence" value="ECO:0007669"/>
    <property type="project" value="UniProtKB-KW"/>
</dbReference>
<dbReference type="GO" id="GO:0090729">
    <property type="term" value="F:toxin activity"/>
    <property type="evidence" value="ECO:0007669"/>
    <property type="project" value="UniProtKB-KW"/>
</dbReference>
<dbReference type="InterPro" id="IPR035311">
    <property type="entry name" value="Cys_Knot_tox"/>
</dbReference>
<dbReference type="Pfam" id="PF17486">
    <property type="entry name" value="Cys_Knot_tox"/>
    <property type="match status" value="1"/>
</dbReference>
<evidence type="ECO:0000250" key="1">
    <source>
        <dbReference type="UniProtKB" id="A0A452CSQ9"/>
    </source>
</evidence>
<evidence type="ECO:0000269" key="2">
    <source>
    </source>
</evidence>
<evidence type="ECO:0000305" key="3"/>
<evidence type="ECO:0000305" key="4">
    <source>
    </source>
</evidence>
<comment type="function">
    <text evidence="2">Neurotoxin with probable ion channel impairing activity. In vivo, is both paralytic and lethal, when injected into lepidopteran larvae.</text>
</comment>
<comment type="subcellular location">
    <subcellularLocation>
        <location evidence="2">Secreted</location>
    </subcellularLocation>
</comment>
<comment type="tissue specificity">
    <text evidence="4">Expressed by the venom gland.</text>
</comment>
<comment type="domain">
    <text evidence="1">The presence of a 'disulfide through disulfide knot' structurally defines this protein as a knottin.</text>
</comment>
<comment type="toxic dose">
    <text evidence="2">LD(50) is 1.40 mg/kg by subcutaneous injection.</text>
</comment>
<comment type="similarity">
    <text evidence="3">Belongs to the neurotoxin 21 family.</text>
</comment>
<protein>
    <recommendedName>
        <fullName>U1-cyrtautoxin-As1a</fullName>
        <shortName>U1-CUTX-As1a</shortName>
    </recommendedName>
    <alternativeName>
        <fullName>Aptotoxin I</fullName>
    </alternativeName>
    <alternativeName>
        <fullName>Aptotoxin-1</fullName>
    </alternativeName>
    <alternativeName>
        <fullName>Paralytic peptide I</fullName>
        <shortName>PP I</shortName>
    </alternativeName>
</protein>
<feature type="chain" id="PRO_0000087663" description="U1-cyrtautoxin-As1a">
    <location>
        <begin position="1"/>
        <end position="74"/>
    </location>
</feature>
<feature type="disulfide bond" evidence="1">
    <location>
        <begin position="23"/>
        <end position="37"/>
    </location>
</feature>
<feature type="disulfide bond" evidence="1">
    <location>
        <begin position="30"/>
        <end position="49"/>
    </location>
</feature>
<feature type="disulfide bond" evidence="1">
    <location>
        <begin position="36"/>
        <end position="64"/>
    </location>
</feature>
<feature type="disulfide bond" evidence="1">
    <location>
        <begin position="67"/>
        <end position="74"/>
    </location>
</feature>
<proteinExistence type="evidence at protein level"/>
<keyword id="KW-0903">Direct protein sequencing</keyword>
<keyword id="KW-1015">Disulfide bond</keyword>
<keyword id="KW-0872">Ion channel impairing toxin</keyword>
<keyword id="KW-0960">Knottin</keyword>
<keyword id="KW-0528">Neurotoxin</keyword>
<keyword id="KW-0964">Secreted</keyword>
<keyword id="KW-0800">Toxin</keyword>
<organism>
    <name type="scientific">Apomastus schlingeri</name>
    <name type="common">Trap-door spider</name>
    <name type="synonym">Aptostichus schlingeri</name>
    <dbReference type="NCBI Taxonomy" id="12944"/>
    <lineage>
        <taxon>Eukaryota</taxon>
        <taxon>Metazoa</taxon>
        <taxon>Ecdysozoa</taxon>
        <taxon>Arthropoda</taxon>
        <taxon>Chelicerata</taxon>
        <taxon>Arachnida</taxon>
        <taxon>Araneae</taxon>
        <taxon>Mygalomorphae</taxon>
        <taxon>Euctenizidae</taxon>
        <taxon>Apomastus</taxon>
    </lineage>
</organism>
<sequence>EIAQNLGSGIPHIRTKLPNGQWCKTPGDLCSSRSECCKAEDSVTYSSGCSRQWSGQQGTFINQCRTCNVESSMC</sequence>